<organism>
    <name type="scientific">Dictyostelium discoideum</name>
    <name type="common">Social amoeba</name>
    <dbReference type="NCBI Taxonomy" id="44689"/>
    <lineage>
        <taxon>Eukaryota</taxon>
        <taxon>Amoebozoa</taxon>
        <taxon>Evosea</taxon>
        <taxon>Eumycetozoa</taxon>
        <taxon>Dictyostelia</taxon>
        <taxon>Dictyosteliales</taxon>
        <taxon>Dictyosteliaceae</taxon>
        <taxon>Dictyostelium</taxon>
    </lineage>
</organism>
<keyword id="KW-0143">Chaperone</keyword>
<keyword id="KW-0963">Cytoplasm</keyword>
<keyword id="KW-0256">Endoplasmic reticulum</keyword>
<keyword id="KW-0449">Lipoprotein</keyword>
<keyword id="KW-0472">Membrane</keyword>
<keyword id="KW-0479">Metal-binding</keyword>
<keyword id="KW-0488">Methylation</keyword>
<keyword id="KW-0492">Microsome</keyword>
<keyword id="KW-0496">Mitochondrion</keyword>
<keyword id="KW-0539">Nucleus</keyword>
<keyword id="KW-0636">Prenylation</keyword>
<keyword id="KW-1185">Reference proteome</keyword>
<keyword id="KW-0677">Repeat</keyword>
<keyword id="KW-0862">Zinc</keyword>
<keyword id="KW-0863">Zinc-finger</keyword>
<comment type="function">
    <text evidence="1">Co-chaperone for Hsp70 family members. Plays a role in protein transport into mitochondria and in the regulation of apoptosis via its role as co-chaperone (By similarity).</text>
</comment>
<comment type="subcellular location">
    <subcellularLocation>
        <location evidence="4">Membrane</location>
        <topology evidence="4">Lipid-anchor</topology>
    </subcellularLocation>
    <subcellularLocation>
        <location evidence="1">Cytoplasm</location>
    </subcellularLocation>
    <subcellularLocation>
        <location evidence="1">Microsome</location>
    </subcellularLocation>
    <subcellularLocation>
        <location evidence="1">Mitochondrion</location>
    </subcellularLocation>
    <subcellularLocation>
        <location evidence="1">Nucleus</location>
    </subcellularLocation>
    <subcellularLocation>
        <location evidence="1">Cytoplasm</location>
        <location evidence="1">Perinuclear region</location>
    </subcellularLocation>
    <text evidence="1">Primarily cytoplasmic and associated with microsomes. A minor proportion is associated with nuclei and mitochondria (By similarity).</text>
</comment>
<proteinExistence type="inferred from homology"/>
<sequence>MVKEKEYYERLGVKPDCTEDELKKAYRKMAVKYHPDKNQGPGKDAAEAKFKDISEAYEVLSDPEKRKMYDSYGSEGMKESGFHASSAEDLFSHFFGAGGGGGGFSFGGGGGDDFGGFSFGNMGGMGGMGGMGGGHKKRRKGEDIEHEMNRSLEELYNGKLVKISISRDEVCKTCKGSGSNKPGVTTTCPTCNGSRYVFQKKQVGPGMIQQVQTACHTCHGTGEKIKEEDKCKECKGKRVIQGKKIVQFQVEKGTRDGERIMLQGQGSEYPGVPPGDVIITIREKPNVNFKRNGDNLIYTKRLKLLDSIAGSQFIINTLDQRKLWVNHEKGDIIKQGDMRYIENEGMPIKGTSRKGKLIIAFDIEYPSNLTNDDIEKLSKILPKAATPSVSKSDCKSVGLSKVNFNTNEQSSHGGAGGAYQQHGGAYGHQKQQQQGFNPADFGAQFGGGGPQQAQQCQQQ</sequence>
<protein>
    <recommendedName>
        <fullName>DnaJ homolog subfamily A member 1 homolog</fullName>
    </recommendedName>
</protein>
<reference key="1">
    <citation type="journal article" date="2005" name="Nature">
        <title>The genome of the social amoeba Dictyostelium discoideum.</title>
        <authorList>
            <person name="Eichinger L."/>
            <person name="Pachebat J.A."/>
            <person name="Gloeckner G."/>
            <person name="Rajandream M.A."/>
            <person name="Sucgang R."/>
            <person name="Berriman M."/>
            <person name="Song J."/>
            <person name="Olsen R."/>
            <person name="Szafranski K."/>
            <person name="Xu Q."/>
            <person name="Tunggal B."/>
            <person name="Kummerfeld S."/>
            <person name="Madera M."/>
            <person name="Konfortov B.A."/>
            <person name="Rivero F."/>
            <person name="Bankier A.T."/>
            <person name="Lehmann R."/>
            <person name="Hamlin N."/>
            <person name="Davies R."/>
            <person name="Gaudet P."/>
            <person name="Fey P."/>
            <person name="Pilcher K."/>
            <person name="Chen G."/>
            <person name="Saunders D."/>
            <person name="Sodergren E.J."/>
            <person name="Davis P."/>
            <person name="Kerhornou A."/>
            <person name="Nie X."/>
            <person name="Hall N."/>
            <person name="Anjard C."/>
            <person name="Hemphill L."/>
            <person name="Bason N."/>
            <person name="Farbrother P."/>
            <person name="Desany B."/>
            <person name="Just E."/>
            <person name="Morio T."/>
            <person name="Rost R."/>
            <person name="Churcher C.M."/>
            <person name="Cooper J."/>
            <person name="Haydock S."/>
            <person name="van Driessche N."/>
            <person name="Cronin A."/>
            <person name="Goodhead I."/>
            <person name="Muzny D.M."/>
            <person name="Mourier T."/>
            <person name="Pain A."/>
            <person name="Lu M."/>
            <person name="Harper D."/>
            <person name="Lindsay R."/>
            <person name="Hauser H."/>
            <person name="James K.D."/>
            <person name="Quiles M."/>
            <person name="Madan Babu M."/>
            <person name="Saito T."/>
            <person name="Buchrieser C."/>
            <person name="Wardroper A."/>
            <person name="Felder M."/>
            <person name="Thangavelu M."/>
            <person name="Johnson D."/>
            <person name="Knights A."/>
            <person name="Loulseged H."/>
            <person name="Mungall K.L."/>
            <person name="Oliver K."/>
            <person name="Price C."/>
            <person name="Quail M.A."/>
            <person name="Urushihara H."/>
            <person name="Hernandez J."/>
            <person name="Rabbinowitsch E."/>
            <person name="Steffen D."/>
            <person name="Sanders M."/>
            <person name="Ma J."/>
            <person name="Kohara Y."/>
            <person name="Sharp S."/>
            <person name="Simmonds M.N."/>
            <person name="Spiegler S."/>
            <person name="Tivey A."/>
            <person name="Sugano S."/>
            <person name="White B."/>
            <person name="Walker D."/>
            <person name="Woodward J.R."/>
            <person name="Winckler T."/>
            <person name="Tanaka Y."/>
            <person name="Shaulsky G."/>
            <person name="Schleicher M."/>
            <person name="Weinstock G.M."/>
            <person name="Rosenthal A."/>
            <person name="Cox E.C."/>
            <person name="Chisholm R.L."/>
            <person name="Gibbs R.A."/>
            <person name="Loomis W.F."/>
            <person name="Platzer M."/>
            <person name="Kay R.R."/>
            <person name="Williams J.G."/>
            <person name="Dear P.H."/>
            <person name="Noegel A.A."/>
            <person name="Barrell B.G."/>
            <person name="Kuspa A."/>
        </authorList>
    </citation>
    <scope>NUCLEOTIDE SEQUENCE [LARGE SCALE GENOMIC DNA]</scope>
    <source>
        <strain>AX4</strain>
    </source>
</reference>
<dbReference type="EMBL" id="AAFI02000177">
    <property type="protein sequence ID" value="EAL61768.1"/>
    <property type="molecule type" value="Genomic_DNA"/>
</dbReference>
<dbReference type="RefSeq" id="XP_635307.1">
    <property type="nucleotide sequence ID" value="XM_630215.1"/>
</dbReference>
<dbReference type="SMR" id="Q54ED3"/>
<dbReference type="STRING" id="44689.Q54ED3"/>
<dbReference type="GlyGen" id="Q54ED3">
    <property type="glycosylation" value="1 site"/>
</dbReference>
<dbReference type="PaxDb" id="44689-DDB0233607"/>
<dbReference type="EnsemblProtists" id="EAL61768">
    <property type="protein sequence ID" value="EAL61768"/>
    <property type="gene ID" value="DDB_G0291568"/>
</dbReference>
<dbReference type="GeneID" id="8628251"/>
<dbReference type="KEGG" id="ddi:DDB_G0291568"/>
<dbReference type="dictyBase" id="DDB_G0291568">
    <property type="gene designation" value="dnaja1"/>
</dbReference>
<dbReference type="VEuPathDB" id="AmoebaDB:DDB_G0291568"/>
<dbReference type="eggNOG" id="KOG0712">
    <property type="taxonomic scope" value="Eukaryota"/>
</dbReference>
<dbReference type="HOGENOM" id="CLU_017633_10_0_1"/>
<dbReference type="InParanoid" id="Q54ED3"/>
<dbReference type="OMA" id="NALCTKC"/>
<dbReference type="PhylomeDB" id="Q54ED3"/>
<dbReference type="Reactome" id="R-DDI-3371497">
    <property type="pathway name" value="HSP90 chaperone cycle for steroid hormone receptors (SHR) in the presence of ligand"/>
</dbReference>
<dbReference type="PRO" id="PR:Q54ED3"/>
<dbReference type="Proteomes" id="UP000002195">
    <property type="component" value="Chromosome 6"/>
</dbReference>
<dbReference type="GO" id="GO:0005737">
    <property type="term" value="C:cytoplasm"/>
    <property type="evidence" value="ECO:0000318"/>
    <property type="project" value="GO_Central"/>
</dbReference>
<dbReference type="GO" id="GO:0005829">
    <property type="term" value="C:cytosol"/>
    <property type="evidence" value="ECO:0000318"/>
    <property type="project" value="GO_Central"/>
</dbReference>
<dbReference type="GO" id="GO:0005783">
    <property type="term" value="C:endoplasmic reticulum"/>
    <property type="evidence" value="ECO:0007669"/>
    <property type="project" value="UniProtKB-KW"/>
</dbReference>
<dbReference type="GO" id="GO:0016020">
    <property type="term" value="C:membrane"/>
    <property type="evidence" value="ECO:0007669"/>
    <property type="project" value="UniProtKB-SubCell"/>
</dbReference>
<dbReference type="GO" id="GO:0005739">
    <property type="term" value="C:mitochondrion"/>
    <property type="evidence" value="ECO:0007669"/>
    <property type="project" value="UniProtKB-SubCell"/>
</dbReference>
<dbReference type="GO" id="GO:0005634">
    <property type="term" value="C:nucleus"/>
    <property type="evidence" value="ECO:0007669"/>
    <property type="project" value="UniProtKB-SubCell"/>
</dbReference>
<dbReference type="GO" id="GO:0048471">
    <property type="term" value="C:perinuclear region of cytoplasm"/>
    <property type="evidence" value="ECO:0007669"/>
    <property type="project" value="UniProtKB-SubCell"/>
</dbReference>
<dbReference type="GO" id="GO:0005524">
    <property type="term" value="F:ATP binding"/>
    <property type="evidence" value="ECO:0007669"/>
    <property type="project" value="InterPro"/>
</dbReference>
<dbReference type="GO" id="GO:0030544">
    <property type="term" value="F:Hsp70 protein binding"/>
    <property type="evidence" value="ECO:0007669"/>
    <property type="project" value="InterPro"/>
</dbReference>
<dbReference type="GO" id="GO:0051087">
    <property type="term" value="F:protein-folding chaperone binding"/>
    <property type="evidence" value="ECO:0000318"/>
    <property type="project" value="GO_Central"/>
</dbReference>
<dbReference type="GO" id="GO:0051082">
    <property type="term" value="F:unfolded protein binding"/>
    <property type="evidence" value="ECO:0007669"/>
    <property type="project" value="InterPro"/>
</dbReference>
<dbReference type="GO" id="GO:0008270">
    <property type="term" value="F:zinc ion binding"/>
    <property type="evidence" value="ECO:0007669"/>
    <property type="project" value="UniProtKB-KW"/>
</dbReference>
<dbReference type="GO" id="GO:0042026">
    <property type="term" value="P:protein refolding"/>
    <property type="evidence" value="ECO:0000318"/>
    <property type="project" value="GO_Central"/>
</dbReference>
<dbReference type="GO" id="GO:0009408">
    <property type="term" value="P:response to heat"/>
    <property type="evidence" value="ECO:0007669"/>
    <property type="project" value="InterPro"/>
</dbReference>
<dbReference type="CDD" id="cd06257">
    <property type="entry name" value="DnaJ"/>
    <property type="match status" value="1"/>
</dbReference>
<dbReference type="CDD" id="cd10747">
    <property type="entry name" value="DnaJ_C"/>
    <property type="match status" value="1"/>
</dbReference>
<dbReference type="CDD" id="cd10719">
    <property type="entry name" value="DnaJ_zf"/>
    <property type="match status" value="1"/>
</dbReference>
<dbReference type="FunFam" id="2.60.260.20:FF:000091">
    <property type="entry name" value="DnaJ domain containing protein"/>
    <property type="match status" value="1"/>
</dbReference>
<dbReference type="FunFam" id="1.10.287.110:FF:000062">
    <property type="entry name" value="DnaJ protein ERDJ3B"/>
    <property type="match status" value="1"/>
</dbReference>
<dbReference type="FunFam" id="2.10.230.10:FF:000001">
    <property type="entry name" value="DnaJ subfamily A member 2"/>
    <property type="match status" value="1"/>
</dbReference>
<dbReference type="Gene3D" id="1.10.287.110">
    <property type="entry name" value="DnaJ domain"/>
    <property type="match status" value="1"/>
</dbReference>
<dbReference type="Gene3D" id="2.10.230.10">
    <property type="entry name" value="Heat shock protein DnaJ, cysteine-rich domain"/>
    <property type="match status" value="1"/>
</dbReference>
<dbReference type="Gene3D" id="2.60.260.20">
    <property type="entry name" value="Urease metallochaperone UreE, N-terminal domain"/>
    <property type="match status" value="2"/>
</dbReference>
<dbReference type="HAMAP" id="MF_01152">
    <property type="entry name" value="DnaJ"/>
    <property type="match status" value="1"/>
</dbReference>
<dbReference type="InterPro" id="IPR012724">
    <property type="entry name" value="DnaJ"/>
</dbReference>
<dbReference type="InterPro" id="IPR002939">
    <property type="entry name" value="DnaJ_C"/>
</dbReference>
<dbReference type="InterPro" id="IPR001623">
    <property type="entry name" value="DnaJ_domain"/>
</dbReference>
<dbReference type="InterPro" id="IPR018253">
    <property type="entry name" value="DnaJ_domain_CS"/>
</dbReference>
<dbReference type="InterPro" id="IPR044713">
    <property type="entry name" value="DNJA1/2-like"/>
</dbReference>
<dbReference type="InterPro" id="IPR008971">
    <property type="entry name" value="HSP40/DnaJ_pept-bd"/>
</dbReference>
<dbReference type="InterPro" id="IPR001305">
    <property type="entry name" value="HSP_DnaJ_Cys-rich_dom"/>
</dbReference>
<dbReference type="InterPro" id="IPR036410">
    <property type="entry name" value="HSP_DnaJ_Cys-rich_dom_sf"/>
</dbReference>
<dbReference type="InterPro" id="IPR036869">
    <property type="entry name" value="J_dom_sf"/>
</dbReference>
<dbReference type="PANTHER" id="PTHR43888">
    <property type="entry name" value="DNAJ-LIKE-2, ISOFORM A-RELATED"/>
    <property type="match status" value="1"/>
</dbReference>
<dbReference type="Pfam" id="PF00226">
    <property type="entry name" value="DnaJ"/>
    <property type="match status" value="1"/>
</dbReference>
<dbReference type="Pfam" id="PF01556">
    <property type="entry name" value="DnaJ_C"/>
    <property type="match status" value="1"/>
</dbReference>
<dbReference type="Pfam" id="PF00684">
    <property type="entry name" value="DnaJ_CXXCXGXG"/>
    <property type="match status" value="1"/>
</dbReference>
<dbReference type="PRINTS" id="PR00625">
    <property type="entry name" value="JDOMAIN"/>
</dbReference>
<dbReference type="SMART" id="SM00271">
    <property type="entry name" value="DnaJ"/>
    <property type="match status" value="1"/>
</dbReference>
<dbReference type="SUPFAM" id="SSF46565">
    <property type="entry name" value="Chaperone J-domain"/>
    <property type="match status" value="1"/>
</dbReference>
<dbReference type="SUPFAM" id="SSF57938">
    <property type="entry name" value="DnaJ/Hsp40 cysteine-rich domain"/>
    <property type="match status" value="1"/>
</dbReference>
<dbReference type="SUPFAM" id="SSF49493">
    <property type="entry name" value="HSP40/DnaJ peptide-binding domain"/>
    <property type="match status" value="2"/>
</dbReference>
<dbReference type="PROSITE" id="PS00636">
    <property type="entry name" value="DNAJ_1"/>
    <property type="match status" value="1"/>
</dbReference>
<dbReference type="PROSITE" id="PS50076">
    <property type="entry name" value="DNAJ_2"/>
    <property type="match status" value="1"/>
</dbReference>
<dbReference type="PROSITE" id="PS51188">
    <property type="entry name" value="ZF_CR"/>
    <property type="match status" value="1"/>
</dbReference>
<name>DNJA1_DICDI</name>
<evidence type="ECO:0000250" key="1"/>
<evidence type="ECO:0000255" key="2"/>
<evidence type="ECO:0000256" key="3">
    <source>
        <dbReference type="SAM" id="MobiDB-lite"/>
    </source>
</evidence>
<evidence type="ECO:0000305" key="4"/>
<accession>Q54ED3</accession>
<gene>
    <name type="primary">dnaja1</name>
    <name type="ORF">DDB_G0291568</name>
</gene>
<feature type="chain" id="PRO_0000328579" description="DnaJ homolog subfamily A member 1 homolog">
    <location>
        <begin position="1"/>
        <end position="456"/>
    </location>
</feature>
<feature type="propeptide" id="PRO_0000396756" description="Removed in mature form" evidence="2">
    <location>
        <begin position="457"/>
        <end position="459"/>
    </location>
</feature>
<feature type="domain" description="J">
    <location>
        <begin position="6"/>
        <end position="73"/>
    </location>
</feature>
<feature type="repeat" description="CXXCXGXG motif">
    <location>
        <begin position="171"/>
        <end position="178"/>
    </location>
</feature>
<feature type="repeat" description="CXXCXGXG motif">
    <location>
        <begin position="188"/>
        <end position="195"/>
    </location>
</feature>
<feature type="repeat" description="CXXCXGXG motif">
    <location>
        <begin position="215"/>
        <end position="222"/>
    </location>
</feature>
<feature type="repeat" description="CXXCXGXG motif">
    <location>
        <begin position="231"/>
        <end position="238"/>
    </location>
</feature>
<feature type="zinc finger region" description="CR-type">
    <location>
        <begin position="158"/>
        <end position="243"/>
    </location>
</feature>
<feature type="region of interest" description="Disordered" evidence="3">
    <location>
        <begin position="405"/>
        <end position="459"/>
    </location>
</feature>
<feature type="compositionally biased region" description="Low complexity" evidence="3">
    <location>
        <begin position="418"/>
        <end position="435"/>
    </location>
</feature>
<feature type="binding site" evidence="1">
    <location>
        <position position="171"/>
    </location>
    <ligand>
        <name>Zn(2+)</name>
        <dbReference type="ChEBI" id="CHEBI:29105"/>
        <label>1</label>
    </ligand>
</feature>
<feature type="binding site" evidence="1">
    <location>
        <position position="174"/>
    </location>
    <ligand>
        <name>Zn(2+)</name>
        <dbReference type="ChEBI" id="CHEBI:29105"/>
        <label>1</label>
    </ligand>
</feature>
<feature type="binding site" evidence="1">
    <location>
        <position position="188"/>
    </location>
    <ligand>
        <name>Zn(2+)</name>
        <dbReference type="ChEBI" id="CHEBI:29105"/>
        <label>2</label>
    </ligand>
</feature>
<feature type="binding site" evidence="1">
    <location>
        <position position="191"/>
    </location>
    <ligand>
        <name>Zn(2+)</name>
        <dbReference type="ChEBI" id="CHEBI:29105"/>
        <label>2</label>
    </ligand>
</feature>
<feature type="binding site" evidence="1">
    <location>
        <position position="215"/>
    </location>
    <ligand>
        <name>Zn(2+)</name>
        <dbReference type="ChEBI" id="CHEBI:29105"/>
        <label>2</label>
    </ligand>
</feature>
<feature type="binding site" evidence="1">
    <location>
        <position position="218"/>
    </location>
    <ligand>
        <name>Zn(2+)</name>
        <dbReference type="ChEBI" id="CHEBI:29105"/>
        <label>2</label>
    </ligand>
</feature>
<feature type="binding site" evidence="1">
    <location>
        <position position="231"/>
    </location>
    <ligand>
        <name>Zn(2+)</name>
        <dbReference type="ChEBI" id="CHEBI:29105"/>
        <label>1</label>
    </ligand>
</feature>
<feature type="binding site" evidence="1">
    <location>
        <position position="234"/>
    </location>
    <ligand>
        <name>Zn(2+)</name>
        <dbReference type="ChEBI" id="CHEBI:29105"/>
        <label>1</label>
    </ligand>
</feature>
<feature type="modified residue" description="Cysteine methyl ester" evidence="2">
    <location>
        <position position="456"/>
    </location>
</feature>
<feature type="lipid moiety-binding region" description="S-farnesyl cysteine" evidence="2">
    <location>
        <position position="456"/>
    </location>
</feature>